<comment type="function">
    <text evidence="2">Ant peptide with probable defensive activity which acts as a potent agonist of the mammalian epidermal growth factor receptor (EGFR). Mimics, both structurally and functionally, vertebrate epidermal growth factor (EGF) peptide hormones. In vivo, intraplantar injection in mice causes long-lasting (several days) hypersensitivity of the injected paw to both mechanical and thermal stimuli. Its long-lasting effect is unusual for venom toxins whose effects are usually immediate. One possible explanation is that it would reduce the duration of a nest attack, discourage future attacks, or enhance the actions of subsequent exposure to other pain-inducing venom peptides.</text>
</comment>
<comment type="subcellular location">
    <subcellularLocation>
        <location evidence="2">Secreted</location>
    </subcellularLocation>
</comment>
<comment type="tissue specificity">
    <text evidence="2">Expressed by the venom gland.</text>
</comment>
<comment type="similarity">
    <text evidence="4">Belongs to the EGF domain peptide family.</text>
</comment>
<reference key="1">
    <citation type="journal article" date="2022" name="Proc. Natl. Acad. Sci. U.S.A.">
        <title>A peptide toxin in ant venom mimics vertebrate EGF-like hormones to cause long-lasting hypersensitivity in mammals.</title>
        <authorList>
            <person name="Eagles D.A."/>
            <person name="Saez N.J."/>
            <person name="Krishnarjuna B."/>
            <person name="Bradford J.J."/>
            <person name="Chin Y.K."/>
            <person name="Starobova H."/>
            <person name="Mueller A."/>
            <person name="Reichelt M.E."/>
            <person name="Undheim E.A.B."/>
            <person name="Norton R.S."/>
            <person name="Thomas W.G."/>
            <person name="Vetter I."/>
            <person name="King G.F."/>
            <person name="Robinson S.D."/>
        </authorList>
    </citation>
    <scope>NUCLEOTIDE SEQUENCE [MRNA]</scope>
    <source>
        <tissue>Venom gland</tissue>
    </source>
</reference>
<dbReference type="EMBL" id="MW317126">
    <property type="protein sequence ID" value="UPH34159.1"/>
    <property type="molecule type" value="mRNA"/>
</dbReference>
<dbReference type="SMR" id="A0A8U0LU66"/>
<dbReference type="GO" id="GO:0005576">
    <property type="term" value="C:extracellular region"/>
    <property type="evidence" value="ECO:0007669"/>
    <property type="project" value="UniProtKB-SubCell"/>
</dbReference>
<dbReference type="GO" id="GO:0090729">
    <property type="term" value="F:toxin activity"/>
    <property type="evidence" value="ECO:0007669"/>
    <property type="project" value="UniProtKB-KW"/>
</dbReference>
<dbReference type="Gene3D" id="2.10.25.10">
    <property type="entry name" value="Laminin"/>
    <property type="match status" value="1"/>
</dbReference>
<dbReference type="InterPro" id="IPR000742">
    <property type="entry name" value="EGF-like_dom"/>
</dbReference>
<dbReference type="SUPFAM" id="SSF57196">
    <property type="entry name" value="EGF/Laminin"/>
    <property type="match status" value="1"/>
</dbReference>
<dbReference type="PROSITE" id="PS00022">
    <property type="entry name" value="EGF_1"/>
    <property type="match status" value="1"/>
</dbReference>
<feature type="signal peptide" evidence="2">
    <location>
        <begin position="1"/>
        <end position="30"/>
    </location>
</feature>
<feature type="chain" id="PRO_0000457849" description="OMEGA-ectatommitoxin(02)-Rm1d">
    <location>
        <begin position="31"/>
        <end position="103"/>
    </location>
</feature>
<feature type="domain" description="EGF-like" evidence="1 4">
    <location>
        <begin position="43"/>
        <end position="82"/>
    </location>
</feature>
<feature type="disulfide bond" evidence="2">
    <location>
        <begin position="39"/>
        <end position="54"/>
    </location>
</feature>
<feature type="disulfide bond" evidence="2">
    <location>
        <begin position="49"/>
        <end position="70"/>
    </location>
</feature>
<feature type="disulfide bond" evidence="2">
    <location>
        <begin position="72"/>
        <end position="81"/>
    </location>
</feature>
<accession>A0A8U0LU66</accession>
<keyword id="KW-1015">Disulfide bond</keyword>
<keyword id="KW-0245">EGF-like domain</keyword>
<keyword id="KW-0528">Neurotoxin</keyword>
<keyword id="KW-0964">Secreted</keyword>
<keyword id="KW-0732">Signal</keyword>
<keyword id="KW-0800">Toxin</keyword>
<sequence>MKDSYISIVIAYLMVTFILVSSMPIEGEKRELGPHRLPCPPKLNDENYCFNGKCVHLVAQDEPGKPYYSCICDEFYIGERCGTLDLTNPGYFLKGQSSTQSSI</sequence>
<name>TX21D_RHYMT</name>
<protein>
    <recommendedName>
        <fullName evidence="4">OMEGA-ectatommitoxin(02)-Rm1d</fullName>
        <shortName evidence="3">ECTX2-Rm1d</shortName>
        <shortName evidence="4">OMEGA-ECTX2-Rm1d</shortName>
    </recommendedName>
</protein>
<organism>
    <name type="scientific">Rhytidoponera metallica</name>
    <name type="common">Australian green-headed ant</name>
    <name type="synonym">Ponera metallica</name>
    <dbReference type="NCBI Taxonomy" id="148364"/>
    <lineage>
        <taxon>Eukaryota</taxon>
        <taxon>Metazoa</taxon>
        <taxon>Ecdysozoa</taxon>
        <taxon>Arthropoda</taxon>
        <taxon>Hexapoda</taxon>
        <taxon>Insecta</taxon>
        <taxon>Pterygota</taxon>
        <taxon>Neoptera</taxon>
        <taxon>Endopterygota</taxon>
        <taxon>Hymenoptera</taxon>
        <taxon>Apocrita</taxon>
        <taxon>Aculeata</taxon>
        <taxon>Formicoidea</taxon>
        <taxon>Formicidae</taxon>
        <taxon>Ectatomminae</taxon>
        <taxon>Ectatommini</taxon>
        <taxon>Rhytidoponera</taxon>
    </lineage>
</organism>
<proteinExistence type="inferred from homology"/>
<evidence type="ECO:0000250" key="1">
    <source>
        <dbReference type="UniProtKB" id="P0DQX9"/>
    </source>
</evidence>
<evidence type="ECO:0000250" key="2">
    <source>
        <dbReference type="UniProtKB" id="P0DSL4"/>
    </source>
</evidence>
<evidence type="ECO:0000303" key="3">
    <source>
    </source>
</evidence>
<evidence type="ECO:0000305" key="4"/>